<sequence length="435" mass="47532">MKIPVTADAESASKDGLQHDDIRATATVRDRIKQFSAEASIPLEKASFSRQAPSQNPSITAKPPIPPQRAALKPGTKLVKATGTELCGNQQHGRSRNISPIAHFPAVPLSNKNTSAILSSDSETGAELADRREFTASKAVRHGSRDPHAEMSSWKSPTPLPQRKKEAPPVPPRSSQLSTESELLQLDPPSLHTDQEGSGVNHTLEVRESDISDSALADAMTASYLIPSHAALGSKRGLKQPPPPPPPRQRGSPSQPLLQLSSDSSKVNPPALGPDEILKRGMDMLDEPKSGSELPPKPPRRVTFNPNPEVFQIESGNVVQGQVISSERKRYEEVWEANRGVARFGVMHDPNVDQKVIRKSLAYEDLVVDLVVRDIWSRSRLPQAELAKIWKLVSHDAVGMLSREEFVVGMWLIDQCLKGHGLPTNVPKSVWKSVQ</sequence>
<gene>
    <name type="primary">IRS4</name>
    <name type="ORF">CIMG_12312</name>
</gene>
<evidence type="ECO:0000250" key="1"/>
<evidence type="ECO:0000255" key="2">
    <source>
        <dbReference type="PROSITE-ProRule" id="PRU00077"/>
    </source>
</evidence>
<evidence type="ECO:0000256" key="3">
    <source>
        <dbReference type="SAM" id="MobiDB-lite"/>
    </source>
</evidence>
<evidence type="ECO:0000305" key="4"/>
<name>IRS4_COCIM</name>
<proteinExistence type="inferred from homology"/>
<reference key="1">
    <citation type="journal article" date="2009" name="Genome Res.">
        <title>Comparative genomic analyses of the human fungal pathogens Coccidioides and their relatives.</title>
        <authorList>
            <person name="Sharpton T.J."/>
            <person name="Stajich J.E."/>
            <person name="Rounsley S.D."/>
            <person name="Gardner M.J."/>
            <person name="Wortman J.R."/>
            <person name="Jordar V.S."/>
            <person name="Maiti R."/>
            <person name="Kodira C.D."/>
            <person name="Neafsey D.E."/>
            <person name="Zeng Q."/>
            <person name="Hung C.-Y."/>
            <person name="McMahan C."/>
            <person name="Muszewska A."/>
            <person name="Grynberg M."/>
            <person name="Mandel M.A."/>
            <person name="Kellner E.M."/>
            <person name="Barker B.M."/>
            <person name="Galgiani J.N."/>
            <person name="Orbach M.J."/>
            <person name="Kirkland T.N."/>
            <person name="Cole G.T."/>
            <person name="Henn M.R."/>
            <person name="Birren B.W."/>
            <person name="Taylor J.W."/>
        </authorList>
    </citation>
    <scope>NUCLEOTIDE SEQUENCE [LARGE SCALE GENOMIC DNA]</scope>
    <source>
        <strain>RS</strain>
    </source>
</reference>
<reference key="2">
    <citation type="journal article" date="2010" name="Genome Res.">
        <title>Population genomic sequencing of Coccidioides fungi reveals recent hybridization and transposon control.</title>
        <authorList>
            <person name="Neafsey D.E."/>
            <person name="Barker B.M."/>
            <person name="Sharpton T.J."/>
            <person name="Stajich J.E."/>
            <person name="Park D.J."/>
            <person name="Whiston E."/>
            <person name="Hung C.-Y."/>
            <person name="McMahan C."/>
            <person name="White J."/>
            <person name="Sykes S."/>
            <person name="Heiman D."/>
            <person name="Young S."/>
            <person name="Zeng Q."/>
            <person name="Abouelleil A."/>
            <person name="Aftuck L."/>
            <person name="Bessette D."/>
            <person name="Brown A."/>
            <person name="FitzGerald M."/>
            <person name="Lui A."/>
            <person name="Macdonald J.P."/>
            <person name="Priest M."/>
            <person name="Orbach M.J."/>
            <person name="Galgiani J.N."/>
            <person name="Kirkland T.N."/>
            <person name="Cole G.T."/>
            <person name="Birren B.W."/>
            <person name="Henn M.R."/>
            <person name="Taylor J.W."/>
            <person name="Rounsley S.D."/>
        </authorList>
    </citation>
    <scope>GENOME REANNOTATION</scope>
    <source>
        <strain>RS</strain>
    </source>
</reference>
<dbReference type="EMBL" id="GG704915">
    <property type="protein sequence ID" value="KJF61348.1"/>
    <property type="molecule type" value="Genomic_DNA"/>
</dbReference>
<dbReference type="RefSeq" id="XP_012213759.1">
    <property type="nucleotide sequence ID" value="XM_012358336.1"/>
</dbReference>
<dbReference type="SMR" id="Q1DKE6"/>
<dbReference type="STRING" id="246410.Q1DKE6"/>
<dbReference type="GeneID" id="24164082"/>
<dbReference type="KEGG" id="cim:CIMG_12312"/>
<dbReference type="VEuPathDB" id="FungiDB:CIMG_12312"/>
<dbReference type="InParanoid" id="Q1DKE6"/>
<dbReference type="OMA" id="PGRINND"/>
<dbReference type="OrthoDB" id="10045710at2759"/>
<dbReference type="Proteomes" id="UP000001261">
    <property type="component" value="Unassembled WGS sequence"/>
</dbReference>
<dbReference type="GO" id="GO:0005737">
    <property type="term" value="C:cytoplasm"/>
    <property type="evidence" value="ECO:0007669"/>
    <property type="project" value="TreeGrafter"/>
</dbReference>
<dbReference type="GO" id="GO:0005886">
    <property type="term" value="C:plasma membrane"/>
    <property type="evidence" value="ECO:0007669"/>
    <property type="project" value="TreeGrafter"/>
</dbReference>
<dbReference type="GO" id="GO:0006897">
    <property type="term" value="P:endocytosis"/>
    <property type="evidence" value="ECO:0007669"/>
    <property type="project" value="TreeGrafter"/>
</dbReference>
<dbReference type="GO" id="GO:0016197">
    <property type="term" value="P:endosomal transport"/>
    <property type="evidence" value="ECO:0007669"/>
    <property type="project" value="TreeGrafter"/>
</dbReference>
<dbReference type="GO" id="GO:0006629">
    <property type="term" value="P:lipid metabolic process"/>
    <property type="evidence" value="ECO:0007669"/>
    <property type="project" value="UniProtKB-KW"/>
</dbReference>
<dbReference type="CDD" id="cd00052">
    <property type="entry name" value="EH"/>
    <property type="match status" value="1"/>
</dbReference>
<dbReference type="Gene3D" id="1.10.238.10">
    <property type="entry name" value="EF-hand"/>
    <property type="match status" value="1"/>
</dbReference>
<dbReference type="InterPro" id="IPR011992">
    <property type="entry name" value="EF-hand-dom_pair"/>
</dbReference>
<dbReference type="InterPro" id="IPR000261">
    <property type="entry name" value="EH_dom"/>
</dbReference>
<dbReference type="PANTHER" id="PTHR11216">
    <property type="entry name" value="EH DOMAIN"/>
    <property type="match status" value="1"/>
</dbReference>
<dbReference type="Pfam" id="PF12763">
    <property type="entry name" value="EH"/>
    <property type="match status" value="1"/>
</dbReference>
<dbReference type="SMART" id="SM00027">
    <property type="entry name" value="EH"/>
    <property type="match status" value="1"/>
</dbReference>
<dbReference type="SUPFAM" id="SSF47473">
    <property type="entry name" value="EF-hand"/>
    <property type="match status" value="1"/>
</dbReference>
<dbReference type="PROSITE" id="PS50031">
    <property type="entry name" value="EH"/>
    <property type="match status" value="1"/>
</dbReference>
<organism>
    <name type="scientific">Coccidioides immitis (strain RS)</name>
    <name type="common">Valley fever fungus</name>
    <dbReference type="NCBI Taxonomy" id="246410"/>
    <lineage>
        <taxon>Eukaryota</taxon>
        <taxon>Fungi</taxon>
        <taxon>Dikarya</taxon>
        <taxon>Ascomycota</taxon>
        <taxon>Pezizomycotina</taxon>
        <taxon>Eurotiomycetes</taxon>
        <taxon>Eurotiomycetidae</taxon>
        <taxon>Onygenales</taxon>
        <taxon>Onygenaceae</taxon>
        <taxon>Coccidioides</taxon>
    </lineage>
</organism>
<comment type="function">
    <text evidence="1">Positive regulator of phosphatidylinositol 4,5-bisphosphate turnover and negatively regulates signaling through the cell integrity pathway. Involved in rDNA silencing (By similarity).</text>
</comment>
<comment type="similarity">
    <text evidence="4">Belongs to the IRS4 family.</text>
</comment>
<protein>
    <recommendedName>
        <fullName>Increased rDNA silencing protein 4</fullName>
    </recommendedName>
</protein>
<accession>Q1DKE6</accession>
<accession>A0A0D8JYL3</accession>
<accession>J3K2K1</accession>
<feature type="chain" id="PRO_0000308755" description="Increased rDNA silencing protein 4">
    <location>
        <begin position="1"/>
        <end position="435"/>
    </location>
</feature>
<feature type="domain" description="EH" evidence="2">
    <location>
        <begin position="327"/>
        <end position="435"/>
    </location>
</feature>
<feature type="region of interest" description="Disordered" evidence="3">
    <location>
        <begin position="1"/>
        <end position="20"/>
    </location>
</feature>
<feature type="region of interest" description="Disordered" evidence="3">
    <location>
        <begin position="39"/>
        <end position="71"/>
    </location>
</feature>
<feature type="region of interest" description="Disordered" evidence="3">
    <location>
        <begin position="136"/>
        <end position="204"/>
    </location>
</feature>
<feature type="region of interest" description="Disordered" evidence="3">
    <location>
        <begin position="233"/>
        <end position="277"/>
    </location>
</feature>
<feature type="compositionally biased region" description="Basic and acidic residues" evidence="3">
    <location>
        <begin position="11"/>
        <end position="20"/>
    </location>
</feature>
<feature type="compositionally biased region" description="Polar residues" evidence="3">
    <location>
        <begin position="48"/>
        <end position="59"/>
    </location>
</feature>
<feature type="compositionally biased region" description="Low complexity" evidence="3">
    <location>
        <begin position="174"/>
        <end position="186"/>
    </location>
</feature>
<feature type="compositionally biased region" description="Low complexity" evidence="3">
    <location>
        <begin position="249"/>
        <end position="265"/>
    </location>
</feature>
<keyword id="KW-0443">Lipid metabolism</keyword>
<keyword id="KW-1185">Reference proteome</keyword>